<comment type="function">
    <text evidence="1">Catalyzes the final step of fatty acid oxidation in which acetyl-CoA is released and the CoA ester of a fatty acid two carbons shorter is formed.</text>
</comment>
<comment type="catalytic activity">
    <reaction evidence="1">
        <text>an acyl-CoA + acetyl-CoA = a 3-oxoacyl-CoA + CoA</text>
        <dbReference type="Rhea" id="RHEA:21564"/>
        <dbReference type="ChEBI" id="CHEBI:57287"/>
        <dbReference type="ChEBI" id="CHEBI:57288"/>
        <dbReference type="ChEBI" id="CHEBI:58342"/>
        <dbReference type="ChEBI" id="CHEBI:90726"/>
        <dbReference type="EC" id="2.3.1.16"/>
    </reaction>
</comment>
<comment type="pathway">
    <text evidence="1">Lipid metabolism; fatty acid beta-oxidation.</text>
</comment>
<comment type="subunit">
    <text evidence="1">Heterotetramer of two alpha chains (FadB) and two beta chains (FadA).</text>
</comment>
<comment type="subcellular location">
    <subcellularLocation>
        <location evidence="1">Cytoplasm</location>
    </subcellularLocation>
</comment>
<comment type="similarity">
    <text evidence="1">Belongs to the thiolase-like superfamily. Thiolase family.</text>
</comment>
<reference key="1">
    <citation type="submission" date="2006-08" db="EMBL/GenBank/DDBJ databases">
        <title>Complete sequence of Shewanella sp. MR-4.</title>
        <authorList>
            <consortium name="US DOE Joint Genome Institute"/>
            <person name="Copeland A."/>
            <person name="Lucas S."/>
            <person name="Lapidus A."/>
            <person name="Barry K."/>
            <person name="Detter J.C."/>
            <person name="Glavina del Rio T."/>
            <person name="Hammon N."/>
            <person name="Israni S."/>
            <person name="Dalin E."/>
            <person name="Tice H."/>
            <person name="Pitluck S."/>
            <person name="Kiss H."/>
            <person name="Brettin T."/>
            <person name="Bruce D."/>
            <person name="Han C."/>
            <person name="Tapia R."/>
            <person name="Gilna P."/>
            <person name="Schmutz J."/>
            <person name="Larimer F."/>
            <person name="Land M."/>
            <person name="Hauser L."/>
            <person name="Kyrpides N."/>
            <person name="Mikhailova N."/>
            <person name="Nealson K."/>
            <person name="Konstantinidis K."/>
            <person name="Klappenbach J."/>
            <person name="Tiedje J."/>
            <person name="Richardson P."/>
        </authorList>
    </citation>
    <scope>NUCLEOTIDE SEQUENCE [LARGE SCALE GENOMIC DNA]</scope>
    <source>
        <strain>MR-4</strain>
    </source>
</reference>
<keyword id="KW-0012">Acyltransferase</keyword>
<keyword id="KW-0963">Cytoplasm</keyword>
<keyword id="KW-0276">Fatty acid metabolism</keyword>
<keyword id="KW-0442">Lipid degradation</keyword>
<keyword id="KW-0443">Lipid metabolism</keyword>
<keyword id="KW-0808">Transferase</keyword>
<name>FADA_SHESM</name>
<evidence type="ECO:0000255" key="1">
    <source>
        <dbReference type="HAMAP-Rule" id="MF_01620"/>
    </source>
</evidence>
<feature type="chain" id="PRO_0000292905" description="3-ketoacyl-CoA thiolase">
    <location>
        <begin position="1"/>
        <end position="387"/>
    </location>
</feature>
<feature type="active site" description="Acyl-thioester intermediate" evidence="1">
    <location>
        <position position="91"/>
    </location>
</feature>
<feature type="active site" description="Proton acceptor" evidence="1">
    <location>
        <position position="343"/>
    </location>
</feature>
<feature type="active site" description="Proton acceptor" evidence="1">
    <location>
        <position position="373"/>
    </location>
</feature>
<sequence>MKQAVIVDCIRTPMGRSKAGVFRNVRAETLSAELMKGLLLRNPQLDPNTIEDVIWGCVQQTLEQGFNIARNASLLAGIPKTAGAVTVNRLCGSSMEAIHQAARAIMTGMGDTFIIGGVEHMGHVPMNHGVDFHPGLANNVAKASGMMGLTAEMLGKLHGITREQQDAFAVRSHQRAHAATVEGRFAKEIYGIEGHDANGALIKVLHDEVIRPETSMESLAALRPVFDPANGTVTAGTSSALSDGASAMLVMEESKARALGLPIRARIRSMAVAGCDAAIMGYGPVPATQKALARAGITVNDLDVIELNEAFAAQSLPCVKDLGLLDVVDEKINLNGGAIALGHPLGCSGARISTTLINLMEHKDATLGLATMCIGLGQGIATVFERV</sequence>
<dbReference type="EC" id="2.3.1.16" evidence="1"/>
<dbReference type="EMBL" id="CP000446">
    <property type="protein sequence ID" value="ABI37099.1"/>
    <property type="molecule type" value="Genomic_DNA"/>
</dbReference>
<dbReference type="RefSeq" id="WP_011620853.1">
    <property type="nucleotide sequence ID" value="NC_008321.1"/>
</dbReference>
<dbReference type="SMR" id="Q0HPB8"/>
<dbReference type="KEGG" id="she:Shewmr4_0017"/>
<dbReference type="HOGENOM" id="CLU_031026_2_3_6"/>
<dbReference type="UniPathway" id="UPA00659"/>
<dbReference type="GO" id="GO:0005737">
    <property type="term" value="C:cytoplasm"/>
    <property type="evidence" value="ECO:0007669"/>
    <property type="project" value="UniProtKB-SubCell"/>
</dbReference>
<dbReference type="GO" id="GO:0003988">
    <property type="term" value="F:acetyl-CoA C-acyltransferase activity"/>
    <property type="evidence" value="ECO:0007669"/>
    <property type="project" value="UniProtKB-UniRule"/>
</dbReference>
<dbReference type="GO" id="GO:0006635">
    <property type="term" value="P:fatty acid beta-oxidation"/>
    <property type="evidence" value="ECO:0007669"/>
    <property type="project" value="UniProtKB-UniRule"/>
</dbReference>
<dbReference type="GO" id="GO:0010124">
    <property type="term" value="P:phenylacetate catabolic process"/>
    <property type="evidence" value="ECO:0007669"/>
    <property type="project" value="TreeGrafter"/>
</dbReference>
<dbReference type="CDD" id="cd00751">
    <property type="entry name" value="thiolase"/>
    <property type="match status" value="1"/>
</dbReference>
<dbReference type="FunFam" id="3.40.47.10:FF:000010">
    <property type="entry name" value="Acetyl-CoA acetyltransferase (Thiolase)"/>
    <property type="match status" value="1"/>
</dbReference>
<dbReference type="Gene3D" id="3.40.47.10">
    <property type="match status" value="2"/>
</dbReference>
<dbReference type="HAMAP" id="MF_01620">
    <property type="entry name" value="FadA"/>
    <property type="match status" value="1"/>
</dbReference>
<dbReference type="InterPro" id="IPR012805">
    <property type="entry name" value="FadA"/>
</dbReference>
<dbReference type="InterPro" id="IPR002155">
    <property type="entry name" value="Thiolase"/>
</dbReference>
<dbReference type="InterPro" id="IPR016039">
    <property type="entry name" value="Thiolase-like"/>
</dbReference>
<dbReference type="InterPro" id="IPR050215">
    <property type="entry name" value="Thiolase-like_sf_Thiolase"/>
</dbReference>
<dbReference type="InterPro" id="IPR020615">
    <property type="entry name" value="Thiolase_acyl_enz_int_AS"/>
</dbReference>
<dbReference type="InterPro" id="IPR020610">
    <property type="entry name" value="Thiolase_AS"/>
</dbReference>
<dbReference type="InterPro" id="IPR020617">
    <property type="entry name" value="Thiolase_C"/>
</dbReference>
<dbReference type="InterPro" id="IPR020613">
    <property type="entry name" value="Thiolase_CS"/>
</dbReference>
<dbReference type="InterPro" id="IPR020616">
    <property type="entry name" value="Thiolase_N"/>
</dbReference>
<dbReference type="NCBIfam" id="TIGR01930">
    <property type="entry name" value="AcCoA-C-Actrans"/>
    <property type="match status" value="1"/>
</dbReference>
<dbReference type="NCBIfam" id="TIGR02445">
    <property type="entry name" value="fadA"/>
    <property type="match status" value="1"/>
</dbReference>
<dbReference type="NCBIfam" id="NF006510">
    <property type="entry name" value="PRK08947.1"/>
    <property type="match status" value="1"/>
</dbReference>
<dbReference type="PANTHER" id="PTHR43853:SF11">
    <property type="entry name" value="3-KETOACYL-COA THIOLASE FADA"/>
    <property type="match status" value="1"/>
</dbReference>
<dbReference type="PANTHER" id="PTHR43853">
    <property type="entry name" value="3-KETOACYL-COA THIOLASE, PEROXISOMAL"/>
    <property type="match status" value="1"/>
</dbReference>
<dbReference type="Pfam" id="PF02803">
    <property type="entry name" value="Thiolase_C"/>
    <property type="match status" value="1"/>
</dbReference>
<dbReference type="Pfam" id="PF00108">
    <property type="entry name" value="Thiolase_N"/>
    <property type="match status" value="1"/>
</dbReference>
<dbReference type="PIRSF" id="PIRSF000429">
    <property type="entry name" value="Ac-CoA_Ac_transf"/>
    <property type="match status" value="1"/>
</dbReference>
<dbReference type="SUPFAM" id="SSF53901">
    <property type="entry name" value="Thiolase-like"/>
    <property type="match status" value="2"/>
</dbReference>
<dbReference type="PROSITE" id="PS00098">
    <property type="entry name" value="THIOLASE_1"/>
    <property type="match status" value="1"/>
</dbReference>
<dbReference type="PROSITE" id="PS00737">
    <property type="entry name" value="THIOLASE_2"/>
    <property type="match status" value="1"/>
</dbReference>
<dbReference type="PROSITE" id="PS00099">
    <property type="entry name" value="THIOLASE_3"/>
    <property type="match status" value="1"/>
</dbReference>
<proteinExistence type="inferred from homology"/>
<organism>
    <name type="scientific">Shewanella sp. (strain MR-4)</name>
    <dbReference type="NCBI Taxonomy" id="60480"/>
    <lineage>
        <taxon>Bacteria</taxon>
        <taxon>Pseudomonadati</taxon>
        <taxon>Pseudomonadota</taxon>
        <taxon>Gammaproteobacteria</taxon>
        <taxon>Alteromonadales</taxon>
        <taxon>Shewanellaceae</taxon>
        <taxon>Shewanella</taxon>
    </lineage>
</organism>
<protein>
    <recommendedName>
        <fullName evidence="1">3-ketoacyl-CoA thiolase</fullName>
        <ecNumber evidence="1">2.3.1.16</ecNumber>
    </recommendedName>
    <alternativeName>
        <fullName evidence="1">Acetyl-CoA acyltransferase</fullName>
    </alternativeName>
    <alternativeName>
        <fullName evidence="1">Beta-ketothiolase</fullName>
    </alternativeName>
    <alternativeName>
        <fullName evidence="1">Fatty acid oxidation complex subunit beta</fullName>
    </alternativeName>
</protein>
<accession>Q0HPB8</accession>
<gene>
    <name evidence="1" type="primary">fadA</name>
    <name type="ordered locus">Shewmr4_0017</name>
</gene>